<comment type="function">
    <text evidence="2">Involved in conjugal transfer of the plasmid.</text>
</comment>
<comment type="subcellular location">
    <subcellularLocation>
        <location evidence="2">Periplasm</location>
    </subcellularLocation>
</comment>
<comment type="similarity">
    <text evidence="2">Belongs to the peptidase S26C family.</text>
</comment>
<evidence type="ECO:0000255" key="1"/>
<evidence type="ECO:0000305" key="2"/>
<protein>
    <recommendedName>
        <fullName>Conjugal transfer protein TraF</fullName>
    </recommendedName>
</protein>
<reference key="1">
    <citation type="journal article" date="1990" name="Plant Mol. Biol.">
        <title>Octopine and nopaline strains of Agrobacterium tumefaciens differ in virulence; molecular characterization of the virF locus.</title>
        <authorList>
            <person name="Melchers L.S."/>
            <person name="Maroney M.J."/>
            <person name="den Dulk-Ras A."/>
            <person name="Thompson D.V."/>
            <person name="van Vuuren H.A.J."/>
            <person name="Schilperoort R.A."/>
            <person name="Hooykaas P.J.J."/>
        </authorList>
    </citation>
    <scope>NUCLEOTIDE SEQUENCE [GENOMIC DNA]</scope>
</reference>
<organism>
    <name type="scientific">Agrobacterium tumefaciens (strain 15955)</name>
    <dbReference type="NCBI Taxonomy" id="190386"/>
    <lineage>
        <taxon>Bacteria</taxon>
        <taxon>Pseudomonadati</taxon>
        <taxon>Pseudomonadota</taxon>
        <taxon>Alphaproteobacteria</taxon>
        <taxon>Hyphomicrobiales</taxon>
        <taxon>Rhizobiaceae</taxon>
        <taxon>Rhizobium/Agrobacterium group</taxon>
        <taxon>Agrobacterium</taxon>
        <taxon>Agrobacterium tumefaciens complex</taxon>
    </lineage>
</organism>
<accession>P15595</accession>
<keyword id="KW-0184">Conjugation</keyword>
<keyword id="KW-0574">Periplasm</keyword>
<keyword id="KW-0614">Plasmid</keyword>
<keyword id="KW-0732">Signal</keyword>
<sequence>MRHRRALLFLTGAAVFVSALTAAAITGGYRLNLTPSEPLGLWRIEQLQRPVAIGDLVFLCPPSTAVFAEARVRGYLRRGLCAGGVAPLIKTVAALPGQRVEITDHVHIDGRSVPASSVSGTDGDGKVLLPDSGGVVPPHHLFLHSSFASSYDSRYFGPVPDSGLLSLARPVFTFHP</sequence>
<proteinExistence type="inferred from homology"/>
<geneLocation type="plasmid">
    <name>pTi15955</name>
</geneLocation>
<feature type="signal peptide" evidence="1">
    <location>
        <begin position="1"/>
        <end position="23"/>
    </location>
</feature>
<feature type="chain" id="PRO_0000022578" description="Conjugal transfer protein TraF">
    <location>
        <begin position="24"/>
        <end position="176"/>
    </location>
</feature>
<dbReference type="EMBL" id="X13981">
    <property type="protein sequence ID" value="CAA32161.1"/>
    <property type="molecule type" value="Genomic_DNA"/>
</dbReference>
<dbReference type="PIR" id="S15913">
    <property type="entry name" value="S15913"/>
</dbReference>
<dbReference type="RefSeq" id="NP_059823.1">
    <property type="nucleotide sequence ID" value="NC_002377.1"/>
</dbReference>
<dbReference type="SMR" id="P15595"/>
<dbReference type="MEROPS" id="S26.014"/>
<dbReference type="GO" id="GO:0042597">
    <property type="term" value="C:periplasmic space"/>
    <property type="evidence" value="ECO:0007669"/>
    <property type="project" value="UniProtKB-SubCell"/>
</dbReference>
<dbReference type="GO" id="GO:0004252">
    <property type="term" value="F:serine-type endopeptidase activity"/>
    <property type="evidence" value="ECO:0007669"/>
    <property type="project" value="InterPro"/>
</dbReference>
<dbReference type="GO" id="GO:0006465">
    <property type="term" value="P:signal peptide processing"/>
    <property type="evidence" value="ECO:0007669"/>
    <property type="project" value="InterPro"/>
</dbReference>
<dbReference type="Gene3D" id="2.10.109.10">
    <property type="entry name" value="Umud Fragment, subunit A"/>
    <property type="match status" value="1"/>
</dbReference>
<dbReference type="InterPro" id="IPR036286">
    <property type="entry name" value="LexA/Signal_pep-like_sf"/>
</dbReference>
<dbReference type="InterPro" id="IPR019533">
    <property type="entry name" value="Peptidase_S26"/>
</dbReference>
<dbReference type="InterPro" id="IPR014139">
    <property type="entry name" value="Peptidase_S26C_TraF"/>
</dbReference>
<dbReference type="NCBIfam" id="NF010412">
    <property type="entry name" value="PRK13838.1"/>
    <property type="match status" value="1"/>
</dbReference>
<dbReference type="NCBIfam" id="TIGR02771">
    <property type="entry name" value="TraF_Ti"/>
    <property type="match status" value="1"/>
</dbReference>
<dbReference type="Pfam" id="PF10502">
    <property type="entry name" value="Peptidase_S26"/>
    <property type="match status" value="1"/>
</dbReference>
<dbReference type="SUPFAM" id="SSF51306">
    <property type="entry name" value="LexA/Signal peptidase"/>
    <property type="match status" value="1"/>
</dbReference>
<gene>
    <name type="primary">traF</name>
</gene>
<name>TRAF_AGRT9</name>